<keyword id="KW-0091">Biomineralization</keyword>
<keyword id="KW-0963">Cytoplasm</keyword>
<keyword id="KW-0272">Extracellular matrix</keyword>
<keyword id="KW-0325">Glycoprotein</keyword>
<keyword id="KW-0539">Nucleus</keyword>
<keyword id="KW-0597">Phosphoprotein</keyword>
<keyword id="KW-1185">Reference proteome</keyword>
<keyword id="KW-0964">Secreted</keyword>
<keyword id="KW-0732">Signal</keyword>
<organism>
    <name type="scientific">Rattus norvegicus</name>
    <name type="common">Rat</name>
    <dbReference type="NCBI Taxonomy" id="10116"/>
    <lineage>
        <taxon>Eukaryota</taxon>
        <taxon>Metazoa</taxon>
        <taxon>Chordata</taxon>
        <taxon>Craniata</taxon>
        <taxon>Vertebrata</taxon>
        <taxon>Euteleostomi</taxon>
        <taxon>Mammalia</taxon>
        <taxon>Eutheria</taxon>
        <taxon>Euarchontoglires</taxon>
        <taxon>Glires</taxon>
        <taxon>Rodentia</taxon>
        <taxon>Myomorpha</taxon>
        <taxon>Muroidea</taxon>
        <taxon>Muridae</taxon>
        <taxon>Murinae</taxon>
        <taxon>Rattus</taxon>
    </lineage>
</organism>
<name>DMP1_RAT</name>
<dbReference type="EMBL" id="L11354">
    <property type="protein sequence ID" value="AAS55638.1"/>
    <property type="molecule type" value="mRNA"/>
</dbReference>
<dbReference type="PIR" id="A45988">
    <property type="entry name" value="A45988"/>
</dbReference>
<dbReference type="FunCoup" id="P98193">
    <property type="interactions" value="2"/>
</dbReference>
<dbReference type="STRING" id="10116.ENSRNOP00000057936"/>
<dbReference type="GlyCosmos" id="P98193">
    <property type="glycosylation" value="3 sites, No reported glycans"/>
</dbReference>
<dbReference type="GlyGen" id="P98193">
    <property type="glycosylation" value="6 sites"/>
</dbReference>
<dbReference type="PhosphoSitePlus" id="P98193"/>
<dbReference type="PaxDb" id="10116-ENSRNOP00000057936"/>
<dbReference type="AGR" id="RGD:2508"/>
<dbReference type="RGD" id="2508">
    <property type="gene designation" value="Dmp1"/>
</dbReference>
<dbReference type="eggNOG" id="KOG1181">
    <property type="taxonomic scope" value="Eukaryota"/>
</dbReference>
<dbReference type="InParanoid" id="P98193"/>
<dbReference type="Reactome" id="R-RNO-3000178">
    <property type="pathway name" value="ECM proteoglycans"/>
</dbReference>
<dbReference type="Reactome" id="R-RNO-381426">
    <property type="pathway name" value="Regulation of Insulin-like Growth Factor (IGF) transport and uptake by Insulin-like Growth Factor Binding Proteins (IGFBPs)"/>
</dbReference>
<dbReference type="Reactome" id="R-RNO-8957275">
    <property type="pathway name" value="Post-translational protein phosphorylation"/>
</dbReference>
<dbReference type="PRO" id="PR:P98193"/>
<dbReference type="Proteomes" id="UP000002494">
    <property type="component" value="Unplaced"/>
</dbReference>
<dbReference type="GO" id="GO:0005737">
    <property type="term" value="C:cytoplasm"/>
    <property type="evidence" value="ECO:0000266"/>
    <property type="project" value="RGD"/>
</dbReference>
<dbReference type="GO" id="GO:0031012">
    <property type="term" value="C:extracellular matrix"/>
    <property type="evidence" value="ECO:0000266"/>
    <property type="project" value="RGD"/>
</dbReference>
<dbReference type="GO" id="GO:0005576">
    <property type="term" value="C:extracellular region"/>
    <property type="evidence" value="ECO:0007669"/>
    <property type="project" value="UniProtKB-KW"/>
</dbReference>
<dbReference type="GO" id="GO:0005634">
    <property type="term" value="C:nucleus"/>
    <property type="evidence" value="ECO:0000266"/>
    <property type="project" value="RGD"/>
</dbReference>
<dbReference type="GO" id="GO:0050840">
    <property type="term" value="F:extracellular matrix binding"/>
    <property type="evidence" value="ECO:0000266"/>
    <property type="project" value="RGD"/>
</dbReference>
<dbReference type="GO" id="GO:0030544">
    <property type="term" value="F:Hsp70 protein binding"/>
    <property type="evidence" value="ECO:0000353"/>
    <property type="project" value="RGD"/>
</dbReference>
<dbReference type="GO" id="GO:0031214">
    <property type="term" value="P:biomineral tissue development"/>
    <property type="evidence" value="ECO:0007669"/>
    <property type="project" value="UniProtKB-KW"/>
</dbReference>
<dbReference type="GO" id="GO:0030198">
    <property type="term" value="P:extracellular matrix organization"/>
    <property type="evidence" value="ECO:0000266"/>
    <property type="project" value="RGD"/>
</dbReference>
<dbReference type="GO" id="GO:0001503">
    <property type="term" value="P:ossification"/>
    <property type="evidence" value="ECO:0007669"/>
    <property type="project" value="InterPro"/>
</dbReference>
<dbReference type="GO" id="GO:0010811">
    <property type="term" value="P:positive regulation of cell-substrate adhesion"/>
    <property type="evidence" value="ECO:0000266"/>
    <property type="project" value="RGD"/>
</dbReference>
<dbReference type="GO" id="GO:0030500">
    <property type="term" value="P:regulation of bone mineralization"/>
    <property type="evidence" value="ECO:0000304"/>
    <property type="project" value="RGD"/>
</dbReference>
<dbReference type="GO" id="GO:0070173">
    <property type="term" value="P:regulation of enamel mineralization"/>
    <property type="evidence" value="ECO:0000266"/>
    <property type="project" value="RGD"/>
</dbReference>
<dbReference type="InterPro" id="IPR009889">
    <property type="entry name" value="DMP1"/>
</dbReference>
<dbReference type="PANTHER" id="PTHR23400">
    <property type="entry name" value="DENTIN MATRIX ACIDIC PHOSPHOPROTEIN 1"/>
    <property type="match status" value="1"/>
</dbReference>
<dbReference type="PANTHER" id="PTHR23400:SF0">
    <property type="entry name" value="DENTIN MATRIX ACIDIC PHOSPHOPROTEIN 1"/>
    <property type="match status" value="1"/>
</dbReference>
<dbReference type="Pfam" id="PF07263">
    <property type="entry name" value="DMP1"/>
    <property type="match status" value="1"/>
</dbReference>
<reference key="1">
    <citation type="journal article" date="1993" name="J. Biol. Chem.">
        <title>Characterization of a novel dentin matrix acidic phosphoprotein. Implications for induction of biomineralization.</title>
        <authorList>
            <person name="George A."/>
            <person name="Sabsay B."/>
            <person name="Simonian P.A."/>
            <person name="Veis A."/>
        </authorList>
    </citation>
    <scope>NUCLEOTIDE SEQUENCE [MRNA]</scope>
    <source>
        <strain>Sprague-Dawley</strain>
        <tissue>Tooth</tissue>
    </source>
</reference>
<evidence type="ECO:0000250" key="1"/>
<evidence type="ECO:0000255" key="2"/>
<evidence type="ECO:0000256" key="3">
    <source>
        <dbReference type="SAM" id="MobiDB-lite"/>
    </source>
</evidence>
<protein>
    <recommendedName>
        <fullName>Dentin matrix acidic phosphoprotein 1</fullName>
        <shortName>DMP-1</shortName>
        <shortName>Dentin matrix protein 1</shortName>
    </recommendedName>
    <alternativeName>
        <fullName>AG1</fullName>
    </alternativeName>
</protein>
<gene>
    <name type="primary">Dmp1</name>
</gene>
<comment type="function">
    <text evidence="1">May have a dual function during osteoblast differentiation. In the nucleus of undifferentiated osteoblasts, unphosphorylated form acts as a transcriptional component for activation of osteoblast-specific genes like osteocalcin. During the osteoblast to osteocyte transition phase it is phosphorylated and exported into the extracellular matrix, where it regulates nucleation of hydroxyapatite (By similarity).</text>
</comment>
<comment type="subunit">
    <text evidence="1">Interacts with importin alpha.</text>
</comment>
<comment type="subcellular location">
    <subcellularLocation>
        <location evidence="1">Nucleus</location>
    </subcellularLocation>
    <subcellularLocation>
        <location evidence="1">Cytoplasm</location>
    </subcellularLocation>
    <subcellularLocation>
        <location evidence="1">Secreted</location>
        <location evidence="1">Extracellular space</location>
        <location evidence="1">Extracellular matrix</location>
    </subcellularLocation>
    <text evidence="1">In proliferating preosteoblasts it is nuclear, during early maturation stage is cytoplasmic and in mature osteoblast localizes in the mineralized matrix. Export from the nucleus of differentiating osteoblast is triggered by the release of calcium from intracellular stores followed by a massive influx of this pool of calcium into the nucleus (By similarity).</text>
</comment>
<comment type="tissue specificity">
    <text>Expressed in tooth particularly in odontoblast and ameloblast.</text>
</comment>
<comment type="PTM">
    <text evidence="1">Phosphorylated in the cytosol and extracellular matrix and unphosphorylated in the nucleus. Phosphorylation is necessary for nucleocytoplasmic transport and may be catalyzed by a nuclear isoform of CK2 and can be augmented by calcium. Phosphorylated (in vitro) by FAM20C in the extracellular medium at sites within the S-x-E/pS motif (By similarity).</text>
</comment>
<accession>P98193</accession>
<proteinExistence type="evidence at transcript level"/>
<sequence>MKTVILLTFLWGLSCALPVARYQNTESESSEERTGNLAQSPPPPMANSDHTDSSESGEELGSDRSQYRPAGGLSKSAGMDADKEEDEDDSGDDTFGDEDNGPGPEERQWGGPSRLDSDEDSADTTQSSEDSTSQENSAQDTPSDSKDHHSDEADSRPEAGDSTQDSESEEYRVGGGSEGESSHGDGSEFDDEGMQSDDPGSTRSDRGHTRMSSAGIRSEESKGDHEPTSTQDSDDSQDVEFSSRKSFRRSRVSEEDDRGELADSNSRETQSVSTEDFRSKEESRSETQEDTAETQSQEDSPEGQDPSSESSEEAGEPSQESSSESQEGVASESRGDNPDNTSQTGDQRDSESSEEDRLNTFSSSESQSTEEQGDSESNESLSLSEESQESAQDEDSSSQEGLQSQSASRESRSQESQSEQDSRSEENRDSDSQDSSRSKEESNSTGSTSSSEEDNHPKNIEADNRKLIVDAYHNKPIGDQDDNDCQDGY</sequence>
<feature type="signal peptide" evidence="2">
    <location>
        <begin position="1"/>
        <end position="16"/>
    </location>
</feature>
<feature type="chain" id="PRO_0000021112" description="Dentin matrix acidic phosphoprotein 1">
    <location>
        <begin position="17"/>
        <end position="489"/>
    </location>
</feature>
<feature type="region of interest" description="Disordered" evidence="3">
    <location>
        <begin position="22"/>
        <end position="489"/>
    </location>
</feature>
<feature type="short sequence motif" description="Cell attachment site" evidence="2">
    <location>
        <begin position="334"/>
        <end position="336"/>
    </location>
</feature>
<feature type="compositionally biased region" description="Acidic residues" evidence="3">
    <location>
        <begin position="82"/>
        <end position="100"/>
    </location>
</feature>
<feature type="compositionally biased region" description="Low complexity" evidence="3">
    <location>
        <begin position="123"/>
        <end position="138"/>
    </location>
</feature>
<feature type="compositionally biased region" description="Basic and acidic residues" evidence="3">
    <location>
        <begin position="143"/>
        <end position="159"/>
    </location>
</feature>
<feature type="compositionally biased region" description="Basic and acidic residues" evidence="3">
    <location>
        <begin position="217"/>
        <end position="227"/>
    </location>
</feature>
<feature type="compositionally biased region" description="Polar residues" evidence="3">
    <location>
        <begin position="263"/>
        <end position="274"/>
    </location>
</feature>
<feature type="compositionally biased region" description="Basic and acidic residues" evidence="3">
    <location>
        <begin position="275"/>
        <end position="287"/>
    </location>
</feature>
<feature type="compositionally biased region" description="Low complexity" evidence="3">
    <location>
        <begin position="316"/>
        <end position="332"/>
    </location>
</feature>
<feature type="compositionally biased region" description="Basic and acidic residues" evidence="3">
    <location>
        <begin position="346"/>
        <end position="358"/>
    </location>
</feature>
<feature type="compositionally biased region" description="Acidic residues" evidence="3">
    <location>
        <begin position="386"/>
        <end position="397"/>
    </location>
</feature>
<feature type="compositionally biased region" description="Low complexity" evidence="3">
    <location>
        <begin position="398"/>
        <end position="419"/>
    </location>
</feature>
<feature type="compositionally biased region" description="Basic and acidic residues" evidence="3">
    <location>
        <begin position="420"/>
        <end position="442"/>
    </location>
</feature>
<feature type="compositionally biased region" description="Basic and acidic residues" evidence="3">
    <location>
        <begin position="453"/>
        <end position="478"/>
    </location>
</feature>
<feature type="compositionally biased region" description="Acidic residues" evidence="3">
    <location>
        <begin position="479"/>
        <end position="489"/>
    </location>
</feature>
<feature type="glycosylation site" description="N-linked (GlcNAc...) asparagine" evidence="2">
    <location>
        <position position="340"/>
    </location>
</feature>
<feature type="glycosylation site" description="N-linked (GlcNAc...) asparagine" evidence="2">
    <location>
        <position position="378"/>
    </location>
</feature>
<feature type="glycosylation site" description="N-linked (GlcNAc...) asparagine" evidence="2">
    <location>
        <position position="443"/>
    </location>
</feature>